<proteinExistence type="evidence at protein level"/>
<keyword id="KW-0002">3D-structure</keyword>
<keyword id="KW-0025">Alternative splicing</keyword>
<keyword id="KW-0165">Cleavage on pair of basic residues</keyword>
<keyword id="KW-0202">Cytokine</keyword>
<keyword id="KW-1015">Disulfide bond</keyword>
<keyword id="KW-0325">Glycoprotein</keyword>
<keyword id="KW-0391">Immunity</keyword>
<keyword id="KW-1267">Proteomics identification</keyword>
<keyword id="KW-1185">Reference proteome</keyword>
<keyword id="KW-0964">Secreted</keyword>
<comment type="function">
    <text evidence="4">Cytokine that binds to TNFRSF13B/TACI and to TNFRSF17/BCMA. Plays a role in the regulation of tumor cell growth. May be involved in monocyte/macrophage-mediated immunological processes.</text>
</comment>
<comment type="subunit">
    <text evidence="11">Homotrimer.</text>
</comment>
<comment type="interaction">
    <interactant intactId="EBI-12856452">
        <id>O75888-3</id>
    </interactant>
    <interactant intactId="EBI-77613">
        <id>P05067</id>
        <label>APP</label>
    </interactant>
    <organismsDiffer>false</organismsDiffer>
    <experiments>3</experiments>
</comment>
<comment type="interaction">
    <interactant intactId="EBI-12856452">
        <id>O75888-3</id>
    </interactant>
    <interactant intactId="EBI-744081">
        <id>Q96EQ0</id>
        <label>SGTB</label>
    </interactant>
    <organismsDiffer>false</organismsDiffer>
    <experiments>3</experiments>
</comment>
<comment type="subcellular location">
    <subcellularLocation>
        <location evidence="5">Secreted</location>
    </subcellularLocation>
</comment>
<comment type="alternative products">
    <event type="alternative splicing"/>
    <isoform>
        <id>O75888-1</id>
        <name>Alpha</name>
        <sequence type="displayed"/>
    </isoform>
    <isoform>
        <id>O75888-2</id>
        <name>Beta</name>
        <sequence type="described" ref="VSP_006450"/>
    </isoform>
    <isoform>
        <id>O75888-3</id>
        <name>Gamma</name>
        <sequence type="described" ref="VSP_006451"/>
    </isoform>
    <isoform>
        <id>O75888-4</id>
        <name>4</name>
        <sequence type="described" ref="VSP_043154"/>
    </isoform>
    <isoform>
        <id>O43508-2</id>
        <name>TWE-PRIL</name>
        <name>TNFSF12-TNFSF13</name>
        <sequence type="external"/>
    </isoform>
    <isoform>
        <id>O75888-5</id>
        <name>5</name>
        <sequence type="described" ref="VSP_046725 VSP_046726"/>
    </isoform>
</comment>
<comment type="tissue specificity">
    <text>Expressed at high levels in transformed cell lines, cancers of colon, thyroid, lymphoid tissues and specifically expressed in monocytes and macrophages.</text>
</comment>
<comment type="induction">
    <text>Down-regulated by phorbol myristate acetate/ionomycin treatment.</text>
</comment>
<comment type="PTM">
    <text evidence="5">The precursor is cleaved by furin.</text>
</comment>
<comment type="similarity">
    <text evidence="11">Belongs to the tumor necrosis factor family.</text>
</comment>
<dbReference type="EMBL" id="AF046888">
    <property type="protein sequence ID" value="AAC61312.1"/>
    <property type="molecule type" value="mRNA"/>
</dbReference>
<dbReference type="EMBL" id="AF136294">
    <property type="protein sequence ID" value="AAD29422.1"/>
    <property type="molecule type" value="mRNA"/>
</dbReference>
<dbReference type="EMBL" id="AF184972">
    <property type="protein sequence ID" value="AAF01321.1"/>
    <property type="molecule type" value="mRNA"/>
</dbReference>
<dbReference type="EMBL" id="AF114011">
    <property type="protein sequence ID" value="AAF59828.1"/>
    <property type="molecule type" value="mRNA"/>
</dbReference>
<dbReference type="EMBL" id="AF114012">
    <property type="protein sequence ID" value="AAF59829.1"/>
    <property type="molecule type" value="mRNA"/>
</dbReference>
<dbReference type="EMBL" id="AF114013">
    <property type="protein sequence ID" value="AAF59830.1"/>
    <property type="molecule type" value="mRNA"/>
</dbReference>
<dbReference type="EMBL" id="AY358880">
    <property type="protein sequence ID" value="AAQ89239.1"/>
    <property type="molecule type" value="mRNA"/>
</dbReference>
<dbReference type="EMBL" id="AY081050">
    <property type="protein sequence ID" value="AAL90442.1"/>
    <property type="molecule type" value="mRNA"/>
</dbReference>
<dbReference type="EMBL" id="AB222992">
    <property type="protein sequence ID" value="BAE16556.1"/>
    <property type="molecule type" value="Genomic_DNA"/>
</dbReference>
<dbReference type="EMBL" id="AK301221">
    <property type="protein sequence ID" value="BAG62794.1"/>
    <property type="molecule type" value="mRNA"/>
</dbReference>
<dbReference type="EMBL" id="BT019561">
    <property type="protein sequence ID" value="AAV38368.1"/>
    <property type="molecule type" value="mRNA"/>
</dbReference>
<dbReference type="EMBL" id="BT019562">
    <property type="protein sequence ID" value="AAV38369.1"/>
    <property type="molecule type" value="mRNA"/>
</dbReference>
<dbReference type="EMBL" id="AC016876">
    <property type="status" value="NOT_ANNOTATED_CDS"/>
    <property type="molecule type" value="Genomic_DNA"/>
</dbReference>
<dbReference type="EMBL" id="BC008042">
    <property type="protein sequence ID" value="AAH08042.1"/>
    <property type="molecule type" value="mRNA"/>
</dbReference>
<dbReference type="CCDS" id="CCDS11111.1">
    <molecule id="O75888-1"/>
</dbReference>
<dbReference type="CCDS" id="CCDS11112.1">
    <molecule id="O75888-2"/>
</dbReference>
<dbReference type="CCDS" id="CCDS42256.1">
    <molecule id="O75888-3"/>
</dbReference>
<dbReference type="CCDS" id="CCDS56018.1">
    <molecule id="O75888-4"/>
</dbReference>
<dbReference type="CCDS" id="CCDS56019.1">
    <molecule id="O75888-5"/>
</dbReference>
<dbReference type="RefSeq" id="NP_001185552.1">
    <molecule id="O75888-4"/>
    <property type="nucleotide sequence ID" value="NM_001198623.2"/>
</dbReference>
<dbReference type="RefSeq" id="NP_001185553.1">
    <molecule id="O75888-5"/>
    <property type="nucleotide sequence ID" value="NM_001198624.2"/>
</dbReference>
<dbReference type="RefSeq" id="NP_003799.1">
    <molecule id="O75888-1"/>
    <property type="nucleotide sequence ID" value="NM_003808.4"/>
</dbReference>
<dbReference type="RefSeq" id="NP_742084.1">
    <molecule id="O75888-2"/>
    <property type="nucleotide sequence ID" value="NM_172087.3"/>
</dbReference>
<dbReference type="RefSeq" id="NP_742085.1">
    <molecule id="O75888-3"/>
    <property type="nucleotide sequence ID" value="NM_172088.4"/>
</dbReference>
<dbReference type="PDB" id="4ZCH">
    <property type="method" value="X-ray"/>
    <property type="resolution" value="2.43 A"/>
    <property type="chains" value="A/B=115-250"/>
</dbReference>
<dbReference type="PDBsum" id="4ZCH"/>
<dbReference type="SMR" id="O75888"/>
<dbReference type="BioGRID" id="114278">
    <property type="interactions" value="32"/>
</dbReference>
<dbReference type="CORUM" id="O75888"/>
<dbReference type="DIP" id="DIP-6232N"/>
<dbReference type="FunCoup" id="O75888">
    <property type="interactions" value="372"/>
</dbReference>
<dbReference type="IntAct" id="O75888">
    <property type="interactions" value="24"/>
</dbReference>
<dbReference type="MINT" id="O75888"/>
<dbReference type="STRING" id="9606.ENSP00000343505"/>
<dbReference type="ChEMBL" id="CHEMBL3713436"/>
<dbReference type="GlyConnect" id="2946">
    <property type="glycosylation" value="10 N-Linked glycans (1 site)"/>
</dbReference>
<dbReference type="GlyCosmos" id="O75888">
    <property type="glycosylation" value="1 site, 15 glycans"/>
</dbReference>
<dbReference type="GlyGen" id="O75888">
    <property type="glycosylation" value="3 sites, 16 N-linked glycans (1 site)"/>
</dbReference>
<dbReference type="iPTMnet" id="O75888"/>
<dbReference type="PhosphoSitePlus" id="O75888"/>
<dbReference type="BioMuta" id="TNFSF13"/>
<dbReference type="MassIVE" id="O75888"/>
<dbReference type="PaxDb" id="9606-ENSP00000343505"/>
<dbReference type="PeptideAtlas" id="O75888"/>
<dbReference type="ProteomicsDB" id="2394"/>
<dbReference type="ProteomicsDB" id="50245">
    <molecule id="O75888-1"/>
</dbReference>
<dbReference type="ProteomicsDB" id="50246">
    <molecule id="O75888-2"/>
</dbReference>
<dbReference type="ProteomicsDB" id="50247">
    <molecule id="O75888-3"/>
</dbReference>
<dbReference type="ProteomicsDB" id="50248">
    <molecule id="O75888-4"/>
</dbReference>
<dbReference type="Antibodypedia" id="1191">
    <property type="antibodies" value="810 antibodies from 45 providers"/>
</dbReference>
<dbReference type="DNASU" id="8741"/>
<dbReference type="Ensembl" id="ENST00000338784.9">
    <molecule id="O75888-1"/>
    <property type="protein sequence ID" value="ENSP00000343505.4"/>
    <property type="gene ID" value="ENSG00000161955.17"/>
</dbReference>
<dbReference type="Ensembl" id="ENST00000349228.8">
    <molecule id="O75888-2"/>
    <property type="protein sequence ID" value="ENSP00000314455.6"/>
    <property type="gene ID" value="ENSG00000161955.17"/>
</dbReference>
<dbReference type="Ensembl" id="ENST00000396542.5">
    <molecule id="O75888-5"/>
    <property type="protein sequence ID" value="ENSP00000379792.1"/>
    <property type="gene ID" value="ENSG00000161955.17"/>
</dbReference>
<dbReference type="Ensembl" id="ENST00000396545.4">
    <molecule id="O75888-3"/>
    <property type="protein sequence ID" value="ENSP00000379794.4"/>
    <property type="gene ID" value="ENSG00000161955.17"/>
</dbReference>
<dbReference type="Ensembl" id="ENST00000625791.2">
    <molecule id="O75888-4"/>
    <property type="protein sequence ID" value="ENSP00000486052.1"/>
    <property type="gene ID" value="ENSG00000161955.17"/>
</dbReference>
<dbReference type="GeneID" id="8741"/>
<dbReference type="KEGG" id="hsa:8741"/>
<dbReference type="MANE-Select" id="ENST00000338784.9">
    <property type="protein sequence ID" value="ENSP00000343505.4"/>
    <property type="RefSeq nucleotide sequence ID" value="NM_003808.4"/>
    <property type="RefSeq protein sequence ID" value="NP_003799.1"/>
</dbReference>
<dbReference type="UCSC" id="uc002ghj.3">
    <molecule id="O75888-1"/>
    <property type="organism name" value="human"/>
</dbReference>
<dbReference type="AGR" id="HGNC:11928"/>
<dbReference type="CTD" id="8741"/>
<dbReference type="DisGeNET" id="8741"/>
<dbReference type="GeneCards" id="TNFSF13"/>
<dbReference type="HGNC" id="HGNC:11928">
    <property type="gene designation" value="TNFSF13"/>
</dbReference>
<dbReference type="HPA" id="ENSG00000161955">
    <property type="expression patterns" value="Tissue enhanced (choroid plexus, salivary gland)"/>
</dbReference>
<dbReference type="MIM" id="604472">
    <property type="type" value="gene"/>
</dbReference>
<dbReference type="neXtProt" id="NX_O75888"/>
<dbReference type="OpenTargets" id="ENSG00000161955"/>
<dbReference type="PharmGKB" id="PA36621"/>
<dbReference type="VEuPathDB" id="HostDB:ENSG00000161955"/>
<dbReference type="eggNOG" id="ENOG502SAX4">
    <property type="taxonomic scope" value="Eukaryota"/>
</dbReference>
<dbReference type="GeneTree" id="ENSGT00940000161488"/>
<dbReference type="HOGENOM" id="CLU_1234667_0_0_1"/>
<dbReference type="InParanoid" id="O75888"/>
<dbReference type="OMA" id="MAYNTCY"/>
<dbReference type="OrthoDB" id="6159739at2759"/>
<dbReference type="PAN-GO" id="O75888">
    <property type="GO annotations" value="3 GO annotations based on evolutionary models"/>
</dbReference>
<dbReference type="PhylomeDB" id="O75888"/>
<dbReference type="TreeFam" id="TF332331"/>
<dbReference type="PathwayCommons" id="O75888"/>
<dbReference type="Reactome" id="R-HSA-450520">
    <property type="pathway name" value="HuR (ELAVL1) binds and stabilizes mRNA"/>
</dbReference>
<dbReference type="Reactome" id="R-HSA-5669034">
    <property type="pathway name" value="TNFs bind their physiological receptors"/>
</dbReference>
<dbReference type="SignaLink" id="O75888"/>
<dbReference type="SIGNOR" id="O75888"/>
<dbReference type="BioGRID-ORCS" id="8741">
    <property type="hits" value="13 hits in 1148 CRISPR screens"/>
</dbReference>
<dbReference type="GeneWiki" id="TNFSF13"/>
<dbReference type="GenomeRNAi" id="8741"/>
<dbReference type="Pharos" id="O75888">
    <property type="development level" value="Tbio"/>
</dbReference>
<dbReference type="Proteomes" id="UP000005640">
    <property type="component" value="Chromosome 17"/>
</dbReference>
<dbReference type="RNAct" id="O75888">
    <property type="molecule type" value="protein"/>
</dbReference>
<dbReference type="Bgee" id="ENSG00000161955">
    <property type="expression patterns" value="Expressed in monocyte and 99 other cell types or tissues"/>
</dbReference>
<dbReference type="ExpressionAtlas" id="O75888">
    <property type="expression patterns" value="baseline and differential"/>
</dbReference>
<dbReference type="GO" id="GO:0005737">
    <property type="term" value="C:cytoplasm"/>
    <property type="evidence" value="ECO:0000314"/>
    <property type="project" value="UniProtKB"/>
</dbReference>
<dbReference type="GO" id="GO:0005829">
    <property type="term" value="C:cytosol"/>
    <property type="evidence" value="ECO:0000304"/>
    <property type="project" value="Reactome"/>
</dbReference>
<dbReference type="GO" id="GO:0070062">
    <property type="term" value="C:extracellular exosome"/>
    <property type="evidence" value="ECO:0007005"/>
    <property type="project" value="UniProtKB"/>
</dbReference>
<dbReference type="GO" id="GO:0005576">
    <property type="term" value="C:extracellular region"/>
    <property type="evidence" value="ECO:0000304"/>
    <property type="project" value="Reactome"/>
</dbReference>
<dbReference type="GO" id="GO:0005615">
    <property type="term" value="C:extracellular space"/>
    <property type="evidence" value="ECO:0000318"/>
    <property type="project" value="GO_Central"/>
</dbReference>
<dbReference type="GO" id="GO:0016020">
    <property type="term" value="C:membrane"/>
    <property type="evidence" value="ECO:0007669"/>
    <property type="project" value="InterPro"/>
</dbReference>
<dbReference type="GO" id="GO:0005654">
    <property type="term" value="C:nucleoplasm"/>
    <property type="evidence" value="ECO:0000304"/>
    <property type="project" value="Reactome"/>
</dbReference>
<dbReference type="GO" id="GO:0005125">
    <property type="term" value="F:cytokine activity"/>
    <property type="evidence" value="ECO:0007669"/>
    <property type="project" value="UniProtKB-KW"/>
</dbReference>
<dbReference type="GO" id="GO:0048018">
    <property type="term" value="F:receptor ligand activity"/>
    <property type="evidence" value="ECO:0000318"/>
    <property type="project" value="GO_Central"/>
</dbReference>
<dbReference type="GO" id="GO:0005102">
    <property type="term" value="F:signaling receptor binding"/>
    <property type="evidence" value="ECO:0000304"/>
    <property type="project" value="ProtInc"/>
</dbReference>
<dbReference type="GO" id="GO:0005164">
    <property type="term" value="F:tumor necrosis factor receptor binding"/>
    <property type="evidence" value="ECO:0007669"/>
    <property type="project" value="InterPro"/>
</dbReference>
<dbReference type="GO" id="GO:0006955">
    <property type="term" value="P:immune response"/>
    <property type="evidence" value="ECO:0007669"/>
    <property type="project" value="InterPro"/>
</dbReference>
<dbReference type="GO" id="GO:0030890">
    <property type="term" value="P:positive regulation of B cell proliferation"/>
    <property type="evidence" value="ECO:0000318"/>
    <property type="project" value="GO_Central"/>
</dbReference>
<dbReference type="GO" id="GO:0008284">
    <property type="term" value="P:positive regulation of cell population proliferation"/>
    <property type="evidence" value="ECO:0000304"/>
    <property type="project" value="ProtInc"/>
</dbReference>
<dbReference type="GO" id="GO:0048298">
    <property type="term" value="P:positive regulation of isotype switching to IgA isotypes"/>
    <property type="evidence" value="ECO:0000314"/>
    <property type="project" value="MGI"/>
</dbReference>
<dbReference type="GO" id="GO:0007165">
    <property type="term" value="P:signal transduction"/>
    <property type="evidence" value="ECO:0000304"/>
    <property type="project" value="ProtInc"/>
</dbReference>
<dbReference type="CDD" id="cd00184">
    <property type="entry name" value="TNF"/>
    <property type="match status" value="1"/>
</dbReference>
<dbReference type="FunFam" id="2.60.120.40:FF:000021">
    <property type="entry name" value="Tumor necrosis factor ligand superfamily member 13"/>
    <property type="match status" value="1"/>
</dbReference>
<dbReference type="Gene3D" id="2.60.120.40">
    <property type="match status" value="1"/>
</dbReference>
<dbReference type="InterPro" id="IPR021184">
    <property type="entry name" value="TNF_CS"/>
</dbReference>
<dbReference type="InterPro" id="IPR006052">
    <property type="entry name" value="TNF_dom"/>
</dbReference>
<dbReference type="InterPro" id="IPR051748">
    <property type="entry name" value="TNF_Ligand_Superfamily"/>
</dbReference>
<dbReference type="InterPro" id="IPR008983">
    <property type="entry name" value="Tumour_necrosis_fac-like_dom"/>
</dbReference>
<dbReference type="PANTHER" id="PTHR15151">
    <property type="entry name" value="PROTEIN EIGER"/>
    <property type="match status" value="1"/>
</dbReference>
<dbReference type="PANTHER" id="PTHR15151:SF12">
    <property type="entry name" value="TUMOR NECROSIS FACTOR LIGAND SUPERFAMILY MEMBER 13"/>
    <property type="match status" value="1"/>
</dbReference>
<dbReference type="Pfam" id="PF00229">
    <property type="entry name" value="TNF"/>
    <property type="match status" value="1"/>
</dbReference>
<dbReference type="SMART" id="SM00207">
    <property type="entry name" value="TNF"/>
    <property type="match status" value="1"/>
</dbReference>
<dbReference type="SUPFAM" id="SSF49842">
    <property type="entry name" value="TNF-like"/>
    <property type="match status" value="1"/>
</dbReference>
<dbReference type="PROSITE" id="PS00251">
    <property type="entry name" value="THD_1"/>
    <property type="match status" value="1"/>
</dbReference>
<dbReference type="PROSITE" id="PS50049">
    <property type="entry name" value="THD_2"/>
    <property type="match status" value="1"/>
</dbReference>
<gene>
    <name type="primary">TNFSF13</name>
    <name type="synonym">APRIL</name>
    <name type="synonym">TALL2</name>
    <name type="synonym">ZTNF2</name>
    <name type="ORF">UNQ383/PRO715</name>
</gene>
<feature type="propeptide" id="PRO_0000034524">
    <location>
        <begin position="1"/>
        <end position="104"/>
    </location>
</feature>
<feature type="chain" id="PRO_0000034525" description="Tumor necrosis factor ligand superfamily member 13">
    <location>
        <begin position="105"/>
        <end position="250"/>
    </location>
</feature>
<feature type="domain" description="THD" evidence="2">
    <location>
        <begin position="116"/>
        <end position="250"/>
    </location>
</feature>
<feature type="region of interest" description="Disordered" evidence="3">
    <location>
        <begin position="61"/>
        <end position="82"/>
    </location>
</feature>
<feature type="region of interest" description="Disordered" evidence="3">
    <location>
        <begin position="89"/>
        <end position="108"/>
    </location>
</feature>
<feature type="site" description="Cleavage; by furin">
    <location>
        <begin position="104"/>
        <end position="105"/>
    </location>
</feature>
<feature type="glycosylation site" description="N-linked (GlcNAc...) asparagine" evidence="1">
    <location>
        <position position="124"/>
    </location>
</feature>
<feature type="disulfide bond" evidence="2">
    <location>
        <begin position="196"/>
        <end position="211"/>
    </location>
</feature>
<feature type="splice variant" id="VSP_046725" description="In isoform 5." evidence="11">
    <location>
        <begin position="1"/>
        <end position="17"/>
    </location>
</feature>
<feature type="splice variant" id="VSP_043154" description="In isoform 4." evidence="9">
    <location>
        <begin position="86"/>
        <end position="113"/>
    </location>
</feature>
<feature type="splice variant" id="VSP_046726" description="In isoform 5." evidence="11">
    <location>
        <begin position="87"/>
        <end position="114"/>
    </location>
</feature>
<feature type="splice variant" id="VSP_006450" description="In isoform Beta." evidence="8">
    <original>KQHSVLHLVPINATSKD</original>
    <variation>N</variation>
    <location>
        <begin position="113"/>
        <end position="129"/>
    </location>
</feature>
<feature type="splice variant" id="VSP_006451" description="In isoform Gamma." evidence="8 10">
    <location>
        <begin position="247"/>
        <end position="249"/>
    </location>
</feature>
<feature type="sequence variant" id="VAR_052586" description="In dbSNP:rs11552708." evidence="7">
    <original>G</original>
    <variation>R</variation>
    <location>
        <position position="67"/>
    </location>
</feature>
<feature type="sequence variant" id="VAR_052587" description="In dbSNP:rs3803800." evidence="6">
    <original>N</original>
    <variation>S</variation>
    <location>
        <position position="96"/>
    </location>
</feature>
<feature type="mutagenesis site" description="Abolishes proteolytic processing." evidence="5">
    <original>RKRR</original>
    <variation>AKRA</variation>
    <location>
        <begin position="101"/>
        <end position="104"/>
    </location>
</feature>
<feature type="strand" evidence="12">
    <location>
        <begin position="117"/>
        <end position="126"/>
    </location>
</feature>
<feature type="strand" evidence="12">
    <location>
        <begin position="132"/>
        <end position="150"/>
    </location>
</feature>
<feature type="strand" evidence="12">
    <location>
        <begin position="152"/>
        <end position="159"/>
    </location>
</feature>
<feature type="strand" evidence="12">
    <location>
        <begin position="161"/>
        <end position="171"/>
    </location>
</feature>
<feature type="strand" evidence="12">
    <location>
        <begin position="175"/>
        <end position="185"/>
    </location>
</feature>
<feature type="strand" evidence="12">
    <location>
        <begin position="190"/>
        <end position="199"/>
    </location>
</feature>
<feature type="strand" evidence="12">
    <location>
        <begin position="209"/>
        <end position="219"/>
    </location>
</feature>
<feature type="strand" evidence="12">
    <location>
        <begin position="224"/>
        <end position="229"/>
    </location>
</feature>
<feature type="turn" evidence="12">
    <location>
        <begin position="240"/>
        <end position="242"/>
    </location>
</feature>
<feature type="strand" evidence="12">
    <location>
        <begin position="243"/>
        <end position="249"/>
    </location>
</feature>
<accession>O75888</accession>
<accession>A8MYD5</accession>
<accession>B4DVT2</accession>
<accession>Q541E1</accession>
<accession>Q5U0G8</accession>
<accession>Q96HV6</accession>
<accession>Q9P1M8</accession>
<accession>Q9P1M9</accession>
<organism>
    <name type="scientific">Homo sapiens</name>
    <name type="common">Human</name>
    <dbReference type="NCBI Taxonomy" id="9606"/>
    <lineage>
        <taxon>Eukaryota</taxon>
        <taxon>Metazoa</taxon>
        <taxon>Chordata</taxon>
        <taxon>Craniata</taxon>
        <taxon>Vertebrata</taxon>
        <taxon>Euteleostomi</taxon>
        <taxon>Mammalia</taxon>
        <taxon>Eutheria</taxon>
        <taxon>Euarchontoglires</taxon>
        <taxon>Primates</taxon>
        <taxon>Haplorrhini</taxon>
        <taxon>Catarrhini</taxon>
        <taxon>Hominidae</taxon>
        <taxon>Homo</taxon>
    </lineage>
</organism>
<name>TNF13_HUMAN</name>
<reference key="1">
    <citation type="journal article" date="1998" name="J. Exp. Med.">
        <title>APRIL, a new ligand of the tumor necrosis factor family, stimulates tumor cell growth.</title>
        <authorList>
            <person name="Hahne M."/>
            <person name="Kataoka T."/>
            <person name="Schroeter M."/>
            <person name="Hofmann K."/>
            <person name="Irmler M."/>
            <person name="Bodmer J.-L."/>
            <person name="Schneider P."/>
            <person name="Bornand T."/>
            <person name="Holler N."/>
            <person name="French L.E."/>
            <person name="Sordat B."/>
            <person name="Rimoldi D."/>
            <person name="Tschopp J."/>
        </authorList>
    </citation>
    <scope>NUCLEOTIDE SEQUENCE [MRNA]</scope>
    <source>
        <tissue>Uterus</tissue>
    </source>
</reference>
<reference key="2">
    <citation type="journal article" date="1999" name="J. Leukoc. Biol.">
        <title>TALL-1 is a novel member of the TNF family that is down-regulated by mitogens.</title>
        <authorList>
            <person name="Shu H.-B."/>
            <person name="Hu W.-H."/>
            <person name="Johnson H."/>
        </authorList>
    </citation>
    <scope>NUCLEOTIDE SEQUENCE [MRNA]</scope>
</reference>
<reference key="3">
    <citation type="submission" date="1999-10" db="EMBL/GenBank/DDBJ databases">
        <title>Homo sapiens tumor necrosis factor homolog.</title>
        <authorList>
            <person name="Farrah T."/>
            <person name="Grant F."/>
            <person name="Haldeman B."/>
            <person name="Whitmore T."/>
            <person name="Gross J."/>
            <person name="O'Hara P."/>
        </authorList>
    </citation>
    <scope>NUCLEOTIDE SEQUENCE [MRNA]</scope>
</reference>
<reference key="4">
    <citation type="journal article" date="2000" name="Cancer Res.">
        <title>APRIL/TRDL-1, a tumor necrosis factor-like ligand, stimulates cell death.</title>
        <authorList>
            <person name="Kelly K.A."/>
            <person name="Manos E.J."/>
            <person name="Jensen G.T."/>
            <person name="Nadauld L."/>
            <person name="Jones D.A."/>
        </authorList>
    </citation>
    <scope>NUCLEOTIDE SEQUENCE [MRNA] (ISOFORMS ALPHA; BETA AND GAMMA)</scope>
</reference>
<reference key="5">
    <citation type="journal article" date="2002" name="EMBO J.">
        <title>An endogenous hybrid mRNA encodes TWE-PRIL, a functional cell surface TWEAK-APRIL fusion protein.</title>
        <authorList>
            <person name="Pradet-Balade B."/>
            <person name="Medema J.P."/>
            <person name="Lopez-Fraga M."/>
            <person name="Lozano J.C."/>
            <person name="Kolfschoten G.M."/>
            <person name="Picard A."/>
            <person name="Martinez-A C."/>
            <person name="Garcia-Sanz J.A."/>
            <person name="Hahne M."/>
        </authorList>
    </citation>
    <scope>NUCLEOTIDE SEQUENCE [MRNA] (ISOFORM ALPHA)</scope>
</reference>
<reference key="6">
    <citation type="submission" date="2005-07" db="EMBL/GenBank/DDBJ databases">
        <title>Polymorphisms of human APRIL gene.</title>
        <authorList>
            <person name="Kawasaki A."/>
            <person name="Tsuchiya N."/>
            <person name="Kusaoi M."/>
            <person name="Murakami T."/>
            <person name="Fukazawa T."/>
            <person name="Matsuta K."/>
            <person name="Hashimoto H."/>
            <person name="Tokunaga K."/>
        </authorList>
    </citation>
    <scope>NUCLEOTIDE SEQUENCE [GENOMIC DNA]</scope>
</reference>
<reference key="7">
    <citation type="journal article" date="2003" name="Genome Res.">
        <title>The secreted protein discovery initiative (SPDI), a large-scale effort to identify novel human secreted and transmembrane proteins: a bioinformatics assessment.</title>
        <authorList>
            <person name="Clark H.F."/>
            <person name="Gurney A.L."/>
            <person name="Abaya E."/>
            <person name="Baker K."/>
            <person name="Baldwin D.T."/>
            <person name="Brush J."/>
            <person name="Chen J."/>
            <person name="Chow B."/>
            <person name="Chui C."/>
            <person name="Crowley C."/>
            <person name="Currell B."/>
            <person name="Deuel B."/>
            <person name="Dowd P."/>
            <person name="Eaton D."/>
            <person name="Foster J.S."/>
            <person name="Grimaldi C."/>
            <person name="Gu Q."/>
            <person name="Hass P.E."/>
            <person name="Heldens S."/>
            <person name="Huang A."/>
            <person name="Kim H.S."/>
            <person name="Klimowski L."/>
            <person name="Jin Y."/>
            <person name="Johnson S."/>
            <person name="Lee J."/>
            <person name="Lewis L."/>
            <person name="Liao D."/>
            <person name="Mark M.R."/>
            <person name="Robbie E."/>
            <person name="Sanchez C."/>
            <person name="Schoenfeld J."/>
            <person name="Seshagiri S."/>
            <person name="Simmons L."/>
            <person name="Singh J."/>
            <person name="Smith V."/>
            <person name="Stinson J."/>
            <person name="Vagts A."/>
            <person name="Vandlen R.L."/>
            <person name="Watanabe C."/>
            <person name="Wieand D."/>
            <person name="Woods K."/>
            <person name="Xie M.-H."/>
            <person name="Yansura D.G."/>
            <person name="Yi S."/>
            <person name="Yu G."/>
            <person name="Yuan J."/>
            <person name="Zhang M."/>
            <person name="Zhang Z."/>
            <person name="Goddard A.D."/>
            <person name="Wood W.I."/>
            <person name="Godowski P.J."/>
            <person name="Gray A.M."/>
        </authorList>
    </citation>
    <scope>NUCLEOTIDE SEQUENCE [LARGE SCALE MRNA] (ISOFORM ALPHA)</scope>
</reference>
<reference key="8">
    <citation type="journal article" date="2004" name="Nat. Genet.">
        <title>Complete sequencing and characterization of 21,243 full-length human cDNAs.</title>
        <authorList>
            <person name="Ota T."/>
            <person name="Suzuki Y."/>
            <person name="Nishikawa T."/>
            <person name="Otsuki T."/>
            <person name="Sugiyama T."/>
            <person name="Irie R."/>
            <person name="Wakamatsu A."/>
            <person name="Hayashi K."/>
            <person name="Sato H."/>
            <person name="Nagai K."/>
            <person name="Kimura K."/>
            <person name="Makita H."/>
            <person name="Sekine M."/>
            <person name="Obayashi M."/>
            <person name="Nishi T."/>
            <person name="Shibahara T."/>
            <person name="Tanaka T."/>
            <person name="Ishii S."/>
            <person name="Yamamoto J."/>
            <person name="Saito K."/>
            <person name="Kawai Y."/>
            <person name="Isono Y."/>
            <person name="Nakamura Y."/>
            <person name="Nagahari K."/>
            <person name="Murakami K."/>
            <person name="Yasuda T."/>
            <person name="Iwayanagi T."/>
            <person name="Wagatsuma M."/>
            <person name="Shiratori A."/>
            <person name="Sudo H."/>
            <person name="Hosoiri T."/>
            <person name="Kaku Y."/>
            <person name="Kodaira H."/>
            <person name="Kondo H."/>
            <person name="Sugawara M."/>
            <person name="Takahashi M."/>
            <person name="Kanda K."/>
            <person name="Yokoi T."/>
            <person name="Furuya T."/>
            <person name="Kikkawa E."/>
            <person name="Omura Y."/>
            <person name="Abe K."/>
            <person name="Kamihara K."/>
            <person name="Katsuta N."/>
            <person name="Sato K."/>
            <person name="Tanikawa M."/>
            <person name="Yamazaki M."/>
            <person name="Ninomiya K."/>
            <person name="Ishibashi T."/>
            <person name="Yamashita H."/>
            <person name="Murakawa K."/>
            <person name="Fujimori K."/>
            <person name="Tanai H."/>
            <person name="Kimata M."/>
            <person name="Watanabe M."/>
            <person name="Hiraoka S."/>
            <person name="Chiba Y."/>
            <person name="Ishida S."/>
            <person name="Ono Y."/>
            <person name="Takiguchi S."/>
            <person name="Watanabe S."/>
            <person name="Yosida M."/>
            <person name="Hotuta T."/>
            <person name="Kusano J."/>
            <person name="Kanehori K."/>
            <person name="Takahashi-Fujii A."/>
            <person name="Hara H."/>
            <person name="Tanase T.-O."/>
            <person name="Nomura Y."/>
            <person name="Togiya S."/>
            <person name="Komai F."/>
            <person name="Hara R."/>
            <person name="Takeuchi K."/>
            <person name="Arita M."/>
            <person name="Imose N."/>
            <person name="Musashino K."/>
            <person name="Yuuki H."/>
            <person name="Oshima A."/>
            <person name="Sasaki N."/>
            <person name="Aotsuka S."/>
            <person name="Yoshikawa Y."/>
            <person name="Matsunawa H."/>
            <person name="Ichihara T."/>
            <person name="Shiohata N."/>
            <person name="Sano S."/>
            <person name="Moriya S."/>
            <person name="Momiyama H."/>
            <person name="Satoh N."/>
            <person name="Takami S."/>
            <person name="Terashima Y."/>
            <person name="Suzuki O."/>
            <person name="Nakagawa S."/>
            <person name="Senoh A."/>
            <person name="Mizoguchi H."/>
            <person name="Goto Y."/>
            <person name="Shimizu F."/>
            <person name="Wakebe H."/>
            <person name="Hishigaki H."/>
            <person name="Watanabe T."/>
            <person name="Sugiyama A."/>
            <person name="Takemoto M."/>
            <person name="Kawakami B."/>
            <person name="Yamazaki M."/>
            <person name="Watanabe K."/>
            <person name="Kumagai A."/>
            <person name="Itakura S."/>
            <person name="Fukuzumi Y."/>
            <person name="Fujimori Y."/>
            <person name="Komiyama M."/>
            <person name="Tashiro H."/>
            <person name="Tanigami A."/>
            <person name="Fujiwara T."/>
            <person name="Ono T."/>
            <person name="Yamada K."/>
            <person name="Fujii Y."/>
            <person name="Ozaki K."/>
            <person name="Hirao M."/>
            <person name="Ohmori Y."/>
            <person name="Kawabata A."/>
            <person name="Hikiji T."/>
            <person name="Kobatake N."/>
            <person name="Inagaki H."/>
            <person name="Ikema Y."/>
            <person name="Okamoto S."/>
            <person name="Okitani R."/>
            <person name="Kawakami T."/>
            <person name="Noguchi S."/>
            <person name="Itoh T."/>
            <person name="Shigeta K."/>
            <person name="Senba T."/>
            <person name="Matsumura K."/>
            <person name="Nakajima Y."/>
            <person name="Mizuno T."/>
            <person name="Morinaga M."/>
            <person name="Sasaki M."/>
            <person name="Togashi T."/>
            <person name="Oyama M."/>
            <person name="Hata H."/>
            <person name="Watanabe M."/>
            <person name="Komatsu T."/>
            <person name="Mizushima-Sugano J."/>
            <person name="Satoh T."/>
            <person name="Shirai Y."/>
            <person name="Takahashi Y."/>
            <person name="Nakagawa K."/>
            <person name="Okumura K."/>
            <person name="Nagase T."/>
            <person name="Nomura N."/>
            <person name="Kikuchi H."/>
            <person name="Masuho Y."/>
            <person name="Yamashita R."/>
            <person name="Nakai K."/>
            <person name="Yada T."/>
            <person name="Nakamura Y."/>
            <person name="Ohara O."/>
            <person name="Isogai T."/>
            <person name="Sugano S."/>
        </authorList>
    </citation>
    <scope>NUCLEOTIDE SEQUENCE [LARGE SCALE MRNA] (ISOFORM 4)</scope>
    <source>
        <tissue>Spleen</tissue>
    </source>
</reference>
<reference key="9">
    <citation type="submission" date="2004-10" db="EMBL/GenBank/DDBJ databases">
        <title>Cloning of human full-length CDSs in BD Creator(TM) system donor vector.</title>
        <authorList>
            <person name="Kalnine N."/>
            <person name="Chen X."/>
            <person name="Rolfs A."/>
            <person name="Halleck A."/>
            <person name="Hines L."/>
            <person name="Eisenstein S."/>
            <person name="Koundinya M."/>
            <person name="Raphael J."/>
            <person name="Moreira D."/>
            <person name="Kelley T."/>
            <person name="LaBaer J."/>
            <person name="Lin Y."/>
            <person name="Phelan M."/>
            <person name="Farmer A."/>
        </authorList>
    </citation>
    <scope>NUCLEOTIDE SEQUENCE [LARGE SCALE MRNA] (ISOFORM ALPHA)</scope>
    <scope>VARIANT ARG-67</scope>
</reference>
<reference key="10">
    <citation type="journal article" date="2006" name="Nature">
        <title>DNA sequence of human chromosome 17 and analysis of rearrangement in the human lineage.</title>
        <authorList>
            <person name="Zody M.C."/>
            <person name="Garber M."/>
            <person name="Adams D.J."/>
            <person name="Sharpe T."/>
            <person name="Harrow J."/>
            <person name="Lupski J.R."/>
            <person name="Nicholson C."/>
            <person name="Searle S.M."/>
            <person name="Wilming L."/>
            <person name="Young S.K."/>
            <person name="Abouelleil A."/>
            <person name="Allen N.R."/>
            <person name="Bi W."/>
            <person name="Bloom T."/>
            <person name="Borowsky M.L."/>
            <person name="Bugalter B.E."/>
            <person name="Butler J."/>
            <person name="Chang J.L."/>
            <person name="Chen C.-K."/>
            <person name="Cook A."/>
            <person name="Corum B."/>
            <person name="Cuomo C.A."/>
            <person name="de Jong P.J."/>
            <person name="DeCaprio D."/>
            <person name="Dewar K."/>
            <person name="FitzGerald M."/>
            <person name="Gilbert J."/>
            <person name="Gibson R."/>
            <person name="Gnerre S."/>
            <person name="Goldstein S."/>
            <person name="Grafham D.V."/>
            <person name="Grocock R."/>
            <person name="Hafez N."/>
            <person name="Hagopian D.S."/>
            <person name="Hart E."/>
            <person name="Norman C.H."/>
            <person name="Humphray S."/>
            <person name="Jaffe D.B."/>
            <person name="Jones M."/>
            <person name="Kamal M."/>
            <person name="Khodiyar V.K."/>
            <person name="LaButti K."/>
            <person name="Laird G."/>
            <person name="Lehoczky J."/>
            <person name="Liu X."/>
            <person name="Lokyitsang T."/>
            <person name="Loveland J."/>
            <person name="Lui A."/>
            <person name="Macdonald P."/>
            <person name="Major J.E."/>
            <person name="Matthews L."/>
            <person name="Mauceli E."/>
            <person name="McCarroll S.A."/>
            <person name="Mihalev A.H."/>
            <person name="Mudge J."/>
            <person name="Nguyen C."/>
            <person name="Nicol R."/>
            <person name="O'Leary S.B."/>
            <person name="Osoegawa K."/>
            <person name="Schwartz D.C."/>
            <person name="Shaw-Smith C."/>
            <person name="Stankiewicz P."/>
            <person name="Steward C."/>
            <person name="Swarbreck D."/>
            <person name="Venkataraman V."/>
            <person name="Whittaker C.A."/>
            <person name="Yang X."/>
            <person name="Zimmer A.R."/>
            <person name="Bradley A."/>
            <person name="Hubbard T."/>
            <person name="Birren B.W."/>
            <person name="Rogers J."/>
            <person name="Lander E.S."/>
            <person name="Nusbaum C."/>
        </authorList>
    </citation>
    <scope>NUCLEOTIDE SEQUENCE [LARGE SCALE GENOMIC DNA]</scope>
</reference>
<reference key="11">
    <citation type="journal article" date="2004" name="Genome Res.">
        <title>The status, quality, and expansion of the NIH full-length cDNA project: the Mammalian Gene Collection (MGC).</title>
        <authorList>
            <consortium name="The MGC Project Team"/>
        </authorList>
    </citation>
    <scope>NUCLEOTIDE SEQUENCE [LARGE SCALE MRNA] (ISOFORM GAMMA)</scope>
    <scope>VARIANT SER-96</scope>
    <source>
        <tissue>Ovary</tissue>
    </source>
</reference>
<reference key="12">
    <citation type="journal article" date="2000" name="Nat. Immunol.">
        <title>APRIL and TALL-I and receptors BCMA and TACI: system for regulating humoral immunity.</title>
        <authorList>
            <person name="Yu G."/>
            <person name="Boone T."/>
            <person name="Delaney J."/>
            <person name="Hawkins N."/>
            <person name="Kelley M.J."/>
            <person name="Ramakrishnan M."/>
            <person name="McCabe S."/>
            <person name="Qiu W.R."/>
            <person name="Kornuc M."/>
            <person name="Xia X.-Z."/>
            <person name="Guo J."/>
            <person name="Stolina M."/>
            <person name="Boyle W.J."/>
            <person name="Sarosi I."/>
            <person name="Hsu H."/>
            <person name="Senaldi G."/>
            <person name="Theill L.E."/>
        </authorList>
    </citation>
    <scope>FUNCTION</scope>
</reference>
<reference key="13">
    <citation type="journal article" date="2001" name="EMBO Rep.">
        <title>Biologically active APRIL is secreted following intracellular processing in the Golgi apparatus by furin convertase.</title>
        <authorList>
            <person name="Lopez-Fraga M."/>
            <person name="Fernandez R."/>
            <person name="Albar J.P."/>
            <person name="Hahne M."/>
        </authorList>
    </citation>
    <scope>PROTEOLYTIC PROCESSING BY FURIN</scope>
    <scope>MUTAGENESIS OF 101-ARG--ARG-104</scope>
    <scope>SUBCELLULAR LOCATION</scope>
</reference>
<protein>
    <recommendedName>
        <fullName>Tumor necrosis factor ligand superfamily member 13</fullName>
    </recommendedName>
    <alternativeName>
        <fullName>A proliferation-inducing ligand</fullName>
        <shortName>APRIL</shortName>
    </alternativeName>
    <alternativeName>
        <fullName>TNF- and APOL-related leukocyte expressed ligand 2</fullName>
        <shortName>TALL-2</shortName>
    </alternativeName>
    <alternativeName>
        <fullName>TNF-related death ligand 1</fullName>
        <shortName>TRDL-1</shortName>
    </alternativeName>
    <cdAntigenName>CD256</cdAntigenName>
</protein>
<evidence type="ECO:0000255" key="1"/>
<evidence type="ECO:0000255" key="2">
    <source>
        <dbReference type="PROSITE-ProRule" id="PRU01387"/>
    </source>
</evidence>
<evidence type="ECO:0000256" key="3">
    <source>
        <dbReference type="SAM" id="MobiDB-lite"/>
    </source>
</evidence>
<evidence type="ECO:0000269" key="4">
    <source>
    </source>
</evidence>
<evidence type="ECO:0000269" key="5">
    <source>
    </source>
</evidence>
<evidence type="ECO:0000269" key="6">
    <source>
    </source>
</evidence>
<evidence type="ECO:0000269" key="7">
    <source ref="9"/>
</evidence>
<evidence type="ECO:0000303" key="8">
    <source>
    </source>
</evidence>
<evidence type="ECO:0000303" key="9">
    <source>
    </source>
</evidence>
<evidence type="ECO:0000303" key="10">
    <source>
    </source>
</evidence>
<evidence type="ECO:0000305" key="11"/>
<evidence type="ECO:0007829" key="12">
    <source>
        <dbReference type="PDB" id="4ZCH"/>
    </source>
</evidence>
<sequence length="250" mass="27433">MPASSPFLLAPKGPPGNMGGPVREPALSVALWLSWGAALGAVACAMALLTQQTELQSLRREVSRLQGTGGPSQNGEGYPWQSLPEQSSDALEAWENGERSRKRRAVLTQKQKKQHSVLHLVPINATSKDDSDVTEVMWQPALRRGRGLQAQGYGVRIQDAGVYLLYSQVLFQDVTFTMGQVVSREGQGRQETLFRCIRSMPSHPDRAYNSCYSAGVFHLHQGDILSVIIPRARAKLNLSPHGTFLGFVKL</sequence>